<dbReference type="EC" id="6.1.1.21" evidence="1"/>
<dbReference type="EMBL" id="CP000568">
    <property type="protein sequence ID" value="ABN52564.1"/>
    <property type="molecule type" value="Genomic_DNA"/>
</dbReference>
<dbReference type="RefSeq" id="WP_003517040.1">
    <property type="nucleotide sequence ID" value="NC_009012.1"/>
</dbReference>
<dbReference type="SMR" id="A3DF35"/>
<dbReference type="STRING" id="203119.Cthe_1332"/>
<dbReference type="GeneID" id="35805081"/>
<dbReference type="KEGG" id="cth:Cthe_1332"/>
<dbReference type="eggNOG" id="COG0124">
    <property type="taxonomic scope" value="Bacteria"/>
</dbReference>
<dbReference type="HOGENOM" id="CLU_025113_1_1_9"/>
<dbReference type="OrthoDB" id="9800814at2"/>
<dbReference type="Proteomes" id="UP000002145">
    <property type="component" value="Chromosome"/>
</dbReference>
<dbReference type="GO" id="GO:0005737">
    <property type="term" value="C:cytoplasm"/>
    <property type="evidence" value="ECO:0007669"/>
    <property type="project" value="UniProtKB-SubCell"/>
</dbReference>
<dbReference type="GO" id="GO:0005524">
    <property type="term" value="F:ATP binding"/>
    <property type="evidence" value="ECO:0007669"/>
    <property type="project" value="UniProtKB-UniRule"/>
</dbReference>
<dbReference type="GO" id="GO:0140096">
    <property type="term" value="F:catalytic activity, acting on a protein"/>
    <property type="evidence" value="ECO:0007669"/>
    <property type="project" value="UniProtKB-ARBA"/>
</dbReference>
<dbReference type="GO" id="GO:0004821">
    <property type="term" value="F:histidine-tRNA ligase activity"/>
    <property type="evidence" value="ECO:0007669"/>
    <property type="project" value="UniProtKB-UniRule"/>
</dbReference>
<dbReference type="GO" id="GO:0016740">
    <property type="term" value="F:transferase activity"/>
    <property type="evidence" value="ECO:0007669"/>
    <property type="project" value="UniProtKB-ARBA"/>
</dbReference>
<dbReference type="GO" id="GO:0006427">
    <property type="term" value="P:histidyl-tRNA aminoacylation"/>
    <property type="evidence" value="ECO:0007669"/>
    <property type="project" value="UniProtKB-UniRule"/>
</dbReference>
<dbReference type="CDD" id="cd00773">
    <property type="entry name" value="HisRS-like_core"/>
    <property type="match status" value="1"/>
</dbReference>
<dbReference type="CDD" id="cd00859">
    <property type="entry name" value="HisRS_anticodon"/>
    <property type="match status" value="1"/>
</dbReference>
<dbReference type="FunFam" id="3.30.930.10:FF:000005">
    <property type="entry name" value="Histidine--tRNA ligase"/>
    <property type="match status" value="1"/>
</dbReference>
<dbReference type="Gene3D" id="3.40.50.800">
    <property type="entry name" value="Anticodon-binding domain"/>
    <property type="match status" value="1"/>
</dbReference>
<dbReference type="Gene3D" id="3.30.930.10">
    <property type="entry name" value="Bira Bifunctional Protein, Domain 2"/>
    <property type="match status" value="1"/>
</dbReference>
<dbReference type="HAMAP" id="MF_00127">
    <property type="entry name" value="His_tRNA_synth"/>
    <property type="match status" value="1"/>
</dbReference>
<dbReference type="InterPro" id="IPR006195">
    <property type="entry name" value="aa-tRNA-synth_II"/>
</dbReference>
<dbReference type="InterPro" id="IPR045864">
    <property type="entry name" value="aa-tRNA-synth_II/BPL/LPL"/>
</dbReference>
<dbReference type="InterPro" id="IPR004154">
    <property type="entry name" value="Anticodon-bd"/>
</dbReference>
<dbReference type="InterPro" id="IPR036621">
    <property type="entry name" value="Anticodon-bd_dom_sf"/>
</dbReference>
<dbReference type="InterPro" id="IPR015807">
    <property type="entry name" value="His-tRNA-ligase"/>
</dbReference>
<dbReference type="InterPro" id="IPR041715">
    <property type="entry name" value="HisRS-like_core"/>
</dbReference>
<dbReference type="InterPro" id="IPR004516">
    <property type="entry name" value="HisRS/HisZ"/>
</dbReference>
<dbReference type="InterPro" id="IPR033656">
    <property type="entry name" value="HisRS_anticodon"/>
</dbReference>
<dbReference type="NCBIfam" id="TIGR00442">
    <property type="entry name" value="hisS"/>
    <property type="match status" value="1"/>
</dbReference>
<dbReference type="PANTHER" id="PTHR43707:SF1">
    <property type="entry name" value="HISTIDINE--TRNA LIGASE, MITOCHONDRIAL-RELATED"/>
    <property type="match status" value="1"/>
</dbReference>
<dbReference type="PANTHER" id="PTHR43707">
    <property type="entry name" value="HISTIDYL-TRNA SYNTHETASE"/>
    <property type="match status" value="1"/>
</dbReference>
<dbReference type="Pfam" id="PF03129">
    <property type="entry name" value="HGTP_anticodon"/>
    <property type="match status" value="1"/>
</dbReference>
<dbReference type="Pfam" id="PF13393">
    <property type="entry name" value="tRNA-synt_His"/>
    <property type="match status" value="1"/>
</dbReference>
<dbReference type="PIRSF" id="PIRSF001549">
    <property type="entry name" value="His-tRNA_synth"/>
    <property type="match status" value="1"/>
</dbReference>
<dbReference type="SUPFAM" id="SSF52954">
    <property type="entry name" value="Class II aaRS ABD-related"/>
    <property type="match status" value="1"/>
</dbReference>
<dbReference type="SUPFAM" id="SSF55681">
    <property type="entry name" value="Class II aaRS and biotin synthetases"/>
    <property type="match status" value="1"/>
</dbReference>
<dbReference type="PROSITE" id="PS50862">
    <property type="entry name" value="AA_TRNA_LIGASE_II"/>
    <property type="match status" value="1"/>
</dbReference>
<evidence type="ECO:0000255" key="1">
    <source>
        <dbReference type="HAMAP-Rule" id="MF_00127"/>
    </source>
</evidence>
<keyword id="KW-0030">Aminoacyl-tRNA synthetase</keyword>
<keyword id="KW-0067">ATP-binding</keyword>
<keyword id="KW-0963">Cytoplasm</keyword>
<keyword id="KW-0436">Ligase</keyword>
<keyword id="KW-0547">Nucleotide-binding</keyword>
<keyword id="KW-0648">Protein biosynthesis</keyword>
<keyword id="KW-1185">Reference proteome</keyword>
<accession>A3DF35</accession>
<gene>
    <name evidence="1" type="primary">hisS</name>
    <name type="ordered locus">Cthe_1332</name>
</gene>
<protein>
    <recommendedName>
        <fullName evidence="1">Histidine--tRNA ligase</fullName>
        <ecNumber evidence="1">6.1.1.21</ecNumber>
    </recommendedName>
    <alternativeName>
        <fullName evidence="1">Histidyl-tRNA synthetase</fullName>
        <shortName evidence="1">HisRS</shortName>
    </alternativeName>
</protein>
<feature type="chain" id="PRO_1000016349" description="Histidine--tRNA ligase">
    <location>
        <begin position="1"/>
        <end position="417"/>
    </location>
</feature>
<organism>
    <name type="scientific">Acetivibrio thermocellus (strain ATCC 27405 / DSM 1237 / JCM 9322 / NBRC 103400 / NCIMB 10682 / NRRL B-4536 / VPI 7372)</name>
    <name type="common">Clostridium thermocellum</name>
    <dbReference type="NCBI Taxonomy" id="203119"/>
    <lineage>
        <taxon>Bacteria</taxon>
        <taxon>Bacillati</taxon>
        <taxon>Bacillota</taxon>
        <taxon>Clostridia</taxon>
        <taxon>Eubacteriales</taxon>
        <taxon>Oscillospiraceae</taxon>
        <taxon>Acetivibrio</taxon>
    </lineage>
</organism>
<reference key="1">
    <citation type="submission" date="2007-02" db="EMBL/GenBank/DDBJ databases">
        <title>Complete sequence of Clostridium thermocellum ATCC 27405.</title>
        <authorList>
            <consortium name="US DOE Joint Genome Institute"/>
            <person name="Copeland A."/>
            <person name="Lucas S."/>
            <person name="Lapidus A."/>
            <person name="Barry K."/>
            <person name="Detter J.C."/>
            <person name="Glavina del Rio T."/>
            <person name="Hammon N."/>
            <person name="Israni S."/>
            <person name="Dalin E."/>
            <person name="Tice H."/>
            <person name="Pitluck S."/>
            <person name="Chertkov O."/>
            <person name="Brettin T."/>
            <person name="Bruce D."/>
            <person name="Han C."/>
            <person name="Tapia R."/>
            <person name="Gilna P."/>
            <person name="Schmutz J."/>
            <person name="Larimer F."/>
            <person name="Land M."/>
            <person name="Hauser L."/>
            <person name="Kyrpides N."/>
            <person name="Mikhailova N."/>
            <person name="Wu J.H.D."/>
            <person name="Newcomb M."/>
            <person name="Richardson P."/>
        </authorList>
    </citation>
    <scope>NUCLEOTIDE SEQUENCE [LARGE SCALE GENOMIC DNA]</scope>
    <source>
        <strain>ATCC 27405 / DSM 1237 / JCM 9322 / NBRC 103400 / NCIMB 10682 / NRRL B-4536 / VPI 7372</strain>
    </source>
</reference>
<comment type="catalytic activity">
    <reaction evidence="1">
        <text>tRNA(His) + L-histidine + ATP = L-histidyl-tRNA(His) + AMP + diphosphate + H(+)</text>
        <dbReference type="Rhea" id="RHEA:17313"/>
        <dbReference type="Rhea" id="RHEA-COMP:9665"/>
        <dbReference type="Rhea" id="RHEA-COMP:9689"/>
        <dbReference type="ChEBI" id="CHEBI:15378"/>
        <dbReference type="ChEBI" id="CHEBI:30616"/>
        <dbReference type="ChEBI" id="CHEBI:33019"/>
        <dbReference type="ChEBI" id="CHEBI:57595"/>
        <dbReference type="ChEBI" id="CHEBI:78442"/>
        <dbReference type="ChEBI" id="CHEBI:78527"/>
        <dbReference type="ChEBI" id="CHEBI:456215"/>
        <dbReference type="EC" id="6.1.1.21"/>
    </reaction>
</comment>
<comment type="subunit">
    <text evidence="1">Homodimer.</text>
</comment>
<comment type="subcellular location">
    <subcellularLocation>
        <location evidence="1">Cytoplasm</location>
    </subcellularLocation>
</comment>
<comment type="similarity">
    <text evidence="1">Belongs to the class-II aminoacyl-tRNA synthetase family.</text>
</comment>
<proteinExistence type="inferred from homology"/>
<sequence>MLTQAPKGTKDILPSEVYKWHYIEKEIAKLCHDFGYKEIRIPVFEHTELFQRGVGDTTDIVQKEMYTFLDKGQRSITLRPEGTAGVVRSYIENGMASLPQPVKLYYNITAYRYENVQKGRYREFHQFGVEAFGAPGPSIDVEIISMVKLFFDRLGIKEISLNINSIGCPVCRAEYNKKLMDYLRPNLSKLCATCNTRFERNPLRIIDCKEESCKKITANAPALVENLCDDCKNHFEGLKAGLENLGIDYKIDKNIVRGLDYYTKTVFEFVSDNIGAQGTVCGGGRYDGLVEACGGKPTPGIGFAMGLERLLMVMENQGIKFPESKKPDIFIAAIGDKANSYAEKMVYELRKEGLSAEKDLMGKSLKAQMKYADKLGAKYSIALGDDEIESGKAVLKNMETGEQKEISLDTLISRLKM</sequence>
<name>SYH_ACET2</name>